<gene>
    <name evidence="5" type="primary">adhE</name>
    <name type="ordered locus">Z2016</name>
    <name type="ordered locus">ECs1741</name>
</gene>
<proteinExistence type="evidence at protein level"/>
<organism>
    <name type="scientific">Escherichia coli O157:H7</name>
    <dbReference type="NCBI Taxonomy" id="83334"/>
    <lineage>
        <taxon>Bacteria</taxon>
        <taxon>Pseudomonadati</taxon>
        <taxon>Pseudomonadota</taxon>
        <taxon>Gammaproteobacteria</taxon>
        <taxon>Enterobacterales</taxon>
        <taxon>Enterobacteriaceae</taxon>
        <taxon>Escherichia</taxon>
    </lineage>
</organism>
<evidence type="ECO:0000250" key="1">
    <source>
        <dbReference type="UniProtKB" id="P0A9Q7"/>
    </source>
</evidence>
<evidence type="ECO:0000250" key="2">
    <source>
        <dbReference type="UniProtKB" id="Q9HTJ1"/>
    </source>
</evidence>
<evidence type="ECO:0000269" key="3">
    <source>
    </source>
</evidence>
<evidence type="ECO:0000269" key="4">
    <source>
    </source>
</evidence>
<evidence type="ECO:0000303" key="5">
    <source>
    </source>
</evidence>
<evidence type="ECO:0000305" key="6"/>
<evidence type="ECO:0007744" key="7">
    <source>
        <dbReference type="PDB" id="6SCG"/>
    </source>
</evidence>
<evidence type="ECO:0007744" key="8">
    <source>
        <dbReference type="PDB" id="6SCI"/>
    </source>
</evidence>
<comment type="function">
    <text evidence="1 3">Under fermentative conditions, catalyzes the sequential NADH-dependent reduction of acetyl-CoA to acetaldehyde and then to ethanol (By similarity). Plays an important role in virulence and is critical for proper regulation of virulence gene expression (PubMed:24846743).</text>
</comment>
<comment type="catalytic activity">
    <reaction evidence="1">
        <text>acetaldehyde + NAD(+) + CoA = acetyl-CoA + NADH + H(+)</text>
        <dbReference type="Rhea" id="RHEA:23288"/>
        <dbReference type="ChEBI" id="CHEBI:15343"/>
        <dbReference type="ChEBI" id="CHEBI:15378"/>
        <dbReference type="ChEBI" id="CHEBI:57287"/>
        <dbReference type="ChEBI" id="CHEBI:57288"/>
        <dbReference type="ChEBI" id="CHEBI:57540"/>
        <dbReference type="ChEBI" id="CHEBI:57945"/>
        <dbReference type="EC" id="1.2.1.10"/>
    </reaction>
    <physiologicalReaction direction="right-to-left" evidence="1">
        <dbReference type="Rhea" id="RHEA:23290"/>
    </physiologicalReaction>
</comment>
<comment type="catalytic activity">
    <reaction evidence="1">
        <text>ethanol + NAD(+) = acetaldehyde + NADH + H(+)</text>
        <dbReference type="Rhea" id="RHEA:25290"/>
        <dbReference type="ChEBI" id="CHEBI:15343"/>
        <dbReference type="ChEBI" id="CHEBI:15378"/>
        <dbReference type="ChEBI" id="CHEBI:16236"/>
        <dbReference type="ChEBI" id="CHEBI:57540"/>
        <dbReference type="ChEBI" id="CHEBI:57945"/>
        <dbReference type="EC" id="1.1.1.1"/>
    </reaction>
    <physiologicalReaction direction="right-to-left" evidence="1">
        <dbReference type="Rhea" id="RHEA:25292"/>
    </physiologicalReaction>
</comment>
<comment type="catalytic activity">
    <reaction evidence="1">
        <text>a primary alcohol + NAD(+) = an aldehyde + NADH + H(+)</text>
        <dbReference type="Rhea" id="RHEA:10736"/>
        <dbReference type="ChEBI" id="CHEBI:15378"/>
        <dbReference type="ChEBI" id="CHEBI:15734"/>
        <dbReference type="ChEBI" id="CHEBI:17478"/>
        <dbReference type="ChEBI" id="CHEBI:57540"/>
        <dbReference type="ChEBI" id="CHEBI:57945"/>
        <dbReference type="EC" id="1.1.1.1"/>
    </reaction>
</comment>
<comment type="cofactor">
    <cofactor evidence="4">
        <name>Fe(2+)</name>
        <dbReference type="ChEBI" id="CHEBI:29033"/>
    </cofactor>
</comment>
<comment type="subunit">
    <text evidence="1">Forms long filaments, called spirosomes.</text>
</comment>
<comment type="domain">
    <text evidence="1">Contains an N-terminal aldehyde dehydrogenase (ALDH) domain and a C-terminal iron-dependent alcohol dehydrogenase (ADH) domain, interconnected by a short linker.</text>
</comment>
<comment type="disruption phenotype">
    <text evidence="3">Deletion of the gene affects gene expression. It leads to strong expression of non-functional flagella coupled to a complete lack of the type 3 secretion system (T3SS), including the structural proteins that comprise the secretory apparatus and its effector proteins. Mutant displays a 'paralyzed' phenotype. It also results in excretion of acetate into the surrounding environment, and reduced binding to host cells, likely because it lacks the T3SS. Deletion of the gene affects colonization and clinical disease in vivo.</text>
</comment>
<comment type="similarity">
    <text evidence="6">In the N-terminal section; belongs to the aldehyde dehydrogenase family.</text>
</comment>
<comment type="similarity">
    <text evidence="6">In the C-terminal section; belongs to the iron-containing alcohol dehydrogenase family.</text>
</comment>
<sequence>MAVTNVAELNALVERVKKAQREYASFTQEQVDKIFRAAALAAADARIPLAKMAVAESGMGIVEDKVIKNHFASEYIYNAYKDEKTCGVLSEDDTFGTITIAEPIGIICGIVPTTNPTSTAIFKSLISLKTRNAIIFSPHPRAKDATNKAADIVLQAAIAAGAPKDLIGWIDQPSVELSNALMHHPDINLILATGGPGMVKAAYSSGKPAIGVGAGNTPVVIDETADIKRAVASVLMSKTFDNGVICASEQSVVVVDSVYDAVRERFATHGGYLLQGKELKAVQDVILKNGALNAAIVGQPAYKIAELAGFSVPENTKILIGEVTVVDESEPFAHEKLSPTLAMYRAKDFEDAVEKAEKLVAMGGIGHTSCLYTDQDNQPARVSYFGQKMKTARILINTPASQGGIGDLYNFKLAPSLTLGCGSWGGNSISENVGPKHLINKKTVAKRAENMLWHKLPKSIYFRRGSLPIALDEVITDGHKRALIVTDRFLFNNGYADQITSVLKAAGVETEVFFEVEADPTLSIVRKGAELANSFKPDVIIALGGGSPMDAAKIMWVMYEHPETHFEELALRFMDIRKRIYKFPKMGVKAKMIAVTTTSGTGSEVTPFAVVTDDATGQKYPLADYALTPDMAIVDANLVMDMPKSLCAFGGLDAVTHAMEAYVSVLASEFSDGQALQALKLLKEYLPASYHEGSKNPVARERVHSAATIAGIAFANAFLGVCHSMAHKLGSQFHIPHGLANALLICNVIRYNANDNPTKQTAFSQYDRPQARRRYAEIADHLGLSAPGDRTAAKIEKLLAWLETLKAELGIPKSIREAGVQEADFLANVDKLSEDAFDDQCTGANPRYPLISELKQILLDTYYGRDYVEGETAAKKEAAPAKAEKKAKKSA</sequence>
<accession>P0A9Q8</accession>
<accession>P17547</accession>
<protein>
    <recommendedName>
        <fullName evidence="6">Bifunctional aldehyde-alcohol dehydrogenase AdhE</fullName>
    </recommendedName>
    <alternativeName>
        <fullName evidence="6">Alcohol dehydrogenase E</fullName>
    </alternativeName>
    <domain>
        <recommendedName>
            <fullName evidence="6">Acetaldehyde dehydrogenase [acetylating]</fullName>
            <shortName evidence="1">ACDH</shortName>
            <ecNumber evidence="1">1.2.1.10</ecNumber>
        </recommendedName>
    </domain>
    <domain>
        <recommendedName>
            <fullName evidence="5">Alcohol dehydrogenase</fullName>
            <shortName evidence="1">ADH</shortName>
            <ecNumber evidence="1">1.1.1.1</ecNumber>
        </recommendedName>
    </domain>
</protein>
<name>ADHE_ECO57</name>
<feature type="initiator methionine" description="Removed" evidence="1">
    <location>
        <position position="1"/>
    </location>
</feature>
<feature type="chain" id="PRO_0000087838" description="Bifunctional aldehyde-alcohol dehydrogenase AdhE">
    <location>
        <begin position="2"/>
        <end position="891"/>
    </location>
</feature>
<feature type="region of interest" description="Aldehyde dehydrogenase" evidence="1">
    <location>
        <begin position="2"/>
        <end position="440"/>
    </location>
</feature>
<feature type="region of interest" description="Linker" evidence="1">
    <location>
        <begin position="441"/>
        <end position="448"/>
    </location>
</feature>
<feature type="region of interest" description="Alcohol dehydrogenase" evidence="1">
    <location>
        <begin position="449"/>
        <end position="891"/>
    </location>
</feature>
<feature type="active site" description="Nucleophile" evidence="2">
    <location>
        <position position="246"/>
    </location>
</feature>
<feature type="binding site" evidence="1">
    <location>
        <begin position="110"/>
        <end position="115"/>
    </location>
    <ligand>
        <name>NAD(+)</name>
        <dbReference type="ChEBI" id="CHEBI:57540"/>
        <label>1</label>
    </ligand>
</feature>
<feature type="binding site" evidence="1">
    <location>
        <position position="195"/>
    </location>
    <ligand>
        <name>NAD(+)</name>
        <dbReference type="ChEBI" id="CHEBI:57540"/>
        <label>1</label>
    </ligand>
</feature>
<feature type="binding site" evidence="1">
    <location>
        <position position="213"/>
    </location>
    <ligand>
        <name>NAD(+)</name>
        <dbReference type="ChEBI" id="CHEBI:57540"/>
        <label>1</label>
    </ligand>
</feature>
<feature type="binding site" evidence="1">
    <location>
        <position position="335"/>
    </location>
    <ligand>
        <name>NAD(+)</name>
        <dbReference type="ChEBI" id="CHEBI:57540"/>
        <label>1</label>
    </ligand>
</feature>
<feature type="binding site" evidence="1">
    <location>
        <position position="419"/>
    </location>
    <ligand>
        <name>NAD(+)</name>
        <dbReference type="ChEBI" id="CHEBI:57540"/>
        <label>1</label>
    </ligand>
</feature>
<feature type="binding site" evidence="4 7">
    <location>
        <position position="487"/>
    </location>
    <ligand>
        <name>NAD(+)</name>
        <dbReference type="ChEBI" id="CHEBI:57540"/>
        <label>2</label>
    </ligand>
</feature>
<feature type="binding site" evidence="4 7">
    <location>
        <position position="519"/>
    </location>
    <ligand>
        <name>NAD(+)</name>
        <dbReference type="ChEBI" id="CHEBI:57540"/>
        <label>2</label>
    </ligand>
</feature>
<feature type="binding site" evidence="4 7">
    <location>
        <begin position="546"/>
        <end position="550"/>
    </location>
    <ligand>
        <name>NAD(+)</name>
        <dbReference type="ChEBI" id="CHEBI:57540"/>
        <label>2</label>
    </ligand>
</feature>
<feature type="binding site" evidence="4 7">
    <location>
        <begin position="597"/>
        <end position="598"/>
    </location>
    <ligand>
        <name>NAD(+)</name>
        <dbReference type="ChEBI" id="CHEBI:57540"/>
        <label>2</label>
    </ligand>
</feature>
<feature type="binding site" evidence="1">
    <location>
        <position position="610"/>
    </location>
    <ligand>
        <name>NAD(+)</name>
        <dbReference type="ChEBI" id="CHEBI:57540"/>
        <label>2</label>
    </ligand>
</feature>
<feature type="binding site" evidence="1">
    <location>
        <position position="619"/>
    </location>
    <ligand>
        <name>NAD(+)</name>
        <dbReference type="ChEBI" id="CHEBI:57540"/>
        <label>2</label>
    </ligand>
</feature>
<feature type="binding site" evidence="4 7">
    <location>
        <position position="638"/>
    </location>
    <ligand>
        <name>NAD(+)</name>
        <dbReference type="ChEBI" id="CHEBI:57540"/>
        <label>2</label>
    </ligand>
</feature>
<feature type="binding site" evidence="4 7 8">
    <location>
        <position position="653"/>
    </location>
    <ligand>
        <name>Fe cation</name>
        <dbReference type="ChEBI" id="CHEBI:24875"/>
    </ligand>
</feature>
<feature type="binding site" evidence="4 7 8">
    <location>
        <position position="657"/>
    </location>
    <ligand>
        <name>Fe cation</name>
        <dbReference type="ChEBI" id="CHEBI:24875"/>
    </ligand>
</feature>
<feature type="binding site" evidence="4 7 8">
    <location>
        <position position="723"/>
    </location>
    <ligand>
        <name>Fe cation</name>
        <dbReference type="ChEBI" id="CHEBI:24875"/>
    </ligand>
</feature>
<feature type="binding site" evidence="4 7 8">
    <location>
        <position position="737"/>
    </location>
    <ligand>
        <name>Fe cation</name>
        <dbReference type="ChEBI" id="CHEBI:24875"/>
    </ligand>
</feature>
<dbReference type="EC" id="1.2.1.10" evidence="1"/>
<dbReference type="EC" id="1.1.1.1" evidence="1"/>
<dbReference type="EMBL" id="AE005174">
    <property type="protein sequence ID" value="AAG56096.1"/>
    <property type="molecule type" value="Genomic_DNA"/>
</dbReference>
<dbReference type="EMBL" id="BA000007">
    <property type="protein sequence ID" value="BAB35164.1"/>
    <property type="molecule type" value="Genomic_DNA"/>
</dbReference>
<dbReference type="PIR" id="E90846">
    <property type="entry name" value="E90846"/>
</dbReference>
<dbReference type="RefSeq" id="NP_309768.1">
    <property type="nucleotide sequence ID" value="NC_002695.1"/>
</dbReference>
<dbReference type="RefSeq" id="WP_000301651.1">
    <property type="nucleotide sequence ID" value="NZ_VOAI01000031.1"/>
</dbReference>
<dbReference type="PDB" id="6SCG">
    <property type="method" value="X-ray"/>
    <property type="resolution" value="1.65 A"/>
    <property type="chains" value="A/B=1-891"/>
</dbReference>
<dbReference type="PDB" id="6SCI">
    <property type="method" value="X-ray"/>
    <property type="resolution" value="1.95 A"/>
    <property type="chains" value="A/B=1-891"/>
</dbReference>
<dbReference type="PDBsum" id="6SCG"/>
<dbReference type="PDBsum" id="6SCI"/>
<dbReference type="SASBDB" id="P0A9Q8"/>
<dbReference type="SMR" id="P0A9Q8"/>
<dbReference type="STRING" id="155864.Z2016"/>
<dbReference type="GeneID" id="913110"/>
<dbReference type="GeneID" id="93775306"/>
<dbReference type="KEGG" id="ece:Z2016"/>
<dbReference type="KEGG" id="ecs:ECs_1741"/>
<dbReference type="PATRIC" id="fig|386585.9.peg.1842"/>
<dbReference type="eggNOG" id="COG1012">
    <property type="taxonomic scope" value="Bacteria"/>
</dbReference>
<dbReference type="eggNOG" id="COG1454">
    <property type="taxonomic scope" value="Bacteria"/>
</dbReference>
<dbReference type="HOGENOM" id="CLU_007207_2_2_6"/>
<dbReference type="OMA" id="KIMWVLY"/>
<dbReference type="Proteomes" id="UP000000558">
    <property type="component" value="Chromosome"/>
</dbReference>
<dbReference type="Proteomes" id="UP000002519">
    <property type="component" value="Chromosome"/>
</dbReference>
<dbReference type="GO" id="GO:0008774">
    <property type="term" value="F:acetaldehyde dehydrogenase (acetylating) activity"/>
    <property type="evidence" value="ECO:0007669"/>
    <property type="project" value="UniProtKB-EC"/>
</dbReference>
<dbReference type="GO" id="GO:0120542">
    <property type="term" value="F:ethanol dehydrogenase (NAD+) activity"/>
    <property type="evidence" value="ECO:0007669"/>
    <property type="project" value="RHEA"/>
</dbReference>
<dbReference type="GO" id="GO:0046872">
    <property type="term" value="F:metal ion binding"/>
    <property type="evidence" value="ECO:0007669"/>
    <property type="project" value="UniProtKB-KW"/>
</dbReference>
<dbReference type="GO" id="GO:0006066">
    <property type="term" value="P:alcohol metabolic process"/>
    <property type="evidence" value="ECO:0007669"/>
    <property type="project" value="InterPro"/>
</dbReference>
<dbReference type="GO" id="GO:0015976">
    <property type="term" value="P:carbon utilization"/>
    <property type="evidence" value="ECO:0007669"/>
    <property type="project" value="InterPro"/>
</dbReference>
<dbReference type="CDD" id="cd08178">
    <property type="entry name" value="AAD_C"/>
    <property type="match status" value="1"/>
</dbReference>
<dbReference type="CDD" id="cd07081">
    <property type="entry name" value="ALDH_F20_ACDH_EutE-like"/>
    <property type="match status" value="1"/>
</dbReference>
<dbReference type="FunFam" id="1.20.1090.10:FF:000001">
    <property type="entry name" value="Aldehyde-alcohol dehydrogenase"/>
    <property type="match status" value="1"/>
</dbReference>
<dbReference type="FunFam" id="3.40.309.10:FF:000007">
    <property type="entry name" value="Aldehyde-alcohol dehydrogenase"/>
    <property type="match status" value="1"/>
</dbReference>
<dbReference type="FunFam" id="3.40.50.1970:FF:000002">
    <property type="entry name" value="Aldehyde-alcohol dehydrogenase"/>
    <property type="match status" value="1"/>
</dbReference>
<dbReference type="FunFam" id="3.40.605.10:FF:000008">
    <property type="entry name" value="Aldehyde-alcohol dehydrogenase"/>
    <property type="match status" value="1"/>
</dbReference>
<dbReference type="Gene3D" id="3.40.50.1970">
    <property type="match status" value="1"/>
</dbReference>
<dbReference type="Gene3D" id="3.40.605.10">
    <property type="entry name" value="Aldehyde Dehydrogenase, Chain A, domain 1"/>
    <property type="match status" value="1"/>
</dbReference>
<dbReference type="Gene3D" id="3.40.309.10">
    <property type="entry name" value="Aldehyde Dehydrogenase, Chain A, domain 2"/>
    <property type="match status" value="1"/>
</dbReference>
<dbReference type="Gene3D" id="1.20.1090.10">
    <property type="entry name" value="Dehydroquinate synthase-like - alpha domain"/>
    <property type="match status" value="1"/>
</dbReference>
<dbReference type="InterPro" id="IPR034789">
    <property type="entry name" value="AAD_C"/>
</dbReference>
<dbReference type="InterPro" id="IPR001670">
    <property type="entry name" value="ADH_Fe/GldA"/>
</dbReference>
<dbReference type="InterPro" id="IPR056798">
    <property type="entry name" value="ADH_Fe_C"/>
</dbReference>
<dbReference type="InterPro" id="IPR018211">
    <property type="entry name" value="ADH_Fe_CS"/>
</dbReference>
<dbReference type="InterPro" id="IPR039697">
    <property type="entry name" value="Alcohol_dehydrogenase_Fe"/>
</dbReference>
<dbReference type="InterPro" id="IPR016161">
    <property type="entry name" value="Ald_DH/histidinol_DH"/>
</dbReference>
<dbReference type="InterPro" id="IPR016163">
    <property type="entry name" value="Ald_DH_C"/>
</dbReference>
<dbReference type="InterPro" id="IPR016162">
    <property type="entry name" value="Ald_DH_N"/>
</dbReference>
<dbReference type="InterPro" id="IPR015590">
    <property type="entry name" value="Aldehyde_DH_dom"/>
</dbReference>
<dbReference type="InterPro" id="IPR012079">
    <property type="entry name" value="Bifunc_Ald-ADH"/>
</dbReference>
<dbReference type="NCBIfam" id="NF010378">
    <property type="entry name" value="PRK13805.1"/>
    <property type="match status" value="1"/>
</dbReference>
<dbReference type="PANTHER" id="PTHR11496">
    <property type="entry name" value="ALCOHOL DEHYDROGENASE"/>
    <property type="match status" value="1"/>
</dbReference>
<dbReference type="PANTHER" id="PTHR11496:SF83">
    <property type="entry name" value="HYDROXYACID-OXOACID TRANSHYDROGENASE, MITOCHONDRIAL"/>
    <property type="match status" value="1"/>
</dbReference>
<dbReference type="Pfam" id="PF25137">
    <property type="entry name" value="ADH_Fe_C"/>
    <property type="match status" value="1"/>
</dbReference>
<dbReference type="Pfam" id="PF00171">
    <property type="entry name" value="Aldedh"/>
    <property type="match status" value="1"/>
</dbReference>
<dbReference type="Pfam" id="PF00465">
    <property type="entry name" value="Fe-ADH"/>
    <property type="match status" value="1"/>
</dbReference>
<dbReference type="PIRSF" id="PIRSF000111">
    <property type="entry name" value="ALDH_ADH"/>
    <property type="match status" value="1"/>
</dbReference>
<dbReference type="SUPFAM" id="SSF53720">
    <property type="entry name" value="ALDH-like"/>
    <property type="match status" value="1"/>
</dbReference>
<dbReference type="SUPFAM" id="SSF56796">
    <property type="entry name" value="Dehydroquinate synthase-like"/>
    <property type="match status" value="1"/>
</dbReference>
<dbReference type="PROSITE" id="PS00913">
    <property type="entry name" value="ADH_IRON_1"/>
    <property type="match status" value="1"/>
</dbReference>
<dbReference type="PROSITE" id="PS00060">
    <property type="entry name" value="ADH_IRON_2"/>
    <property type="match status" value="1"/>
</dbReference>
<reference key="1">
    <citation type="journal article" date="2001" name="Nature">
        <title>Genome sequence of enterohaemorrhagic Escherichia coli O157:H7.</title>
        <authorList>
            <person name="Perna N.T."/>
            <person name="Plunkett G. III"/>
            <person name="Burland V."/>
            <person name="Mau B."/>
            <person name="Glasner J.D."/>
            <person name="Rose D.J."/>
            <person name="Mayhew G.F."/>
            <person name="Evans P.S."/>
            <person name="Gregor J."/>
            <person name="Kirkpatrick H.A."/>
            <person name="Posfai G."/>
            <person name="Hackett J."/>
            <person name="Klink S."/>
            <person name="Boutin A."/>
            <person name="Shao Y."/>
            <person name="Miller L."/>
            <person name="Grotbeck E.J."/>
            <person name="Davis N.W."/>
            <person name="Lim A."/>
            <person name="Dimalanta E.T."/>
            <person name="Potamousis K."/>
            <person name="Apodaca J."/>
            <person name="Anantharaman T.S."/>
            <person name="Lin J."/>
            <person name="Yen G."/>
            <person name="Schwartz D.C."/>
            <person name="Welch R.A."/>
            <person name="Blattner F.R."/>
        </authorList>
    </citation>
    <scope>NUCLEOTIDE SEQUENCE [LARGE SCALE GENOMIC DNA]</scope>
    <source>
        <strain>O157:H7 / EDL933 / ATCC 700927 / EHEC</strain>
    </source>
</reference>
<reference key="2">
    <citation type="journal article" date="2001" name="DNA Res.">
        <title>Complete genome sequence of enterohemorrhagic Escherichia coli O157:H7 and genomic comparison with a laboratory strain K-12.</title>
        <authorList>
            <person name="Hayashi T."/>
            <person name="Makino K."/>
            <person name="Ohnishi M."/>
            <person name="Kurokawa K."/>
            <person name="Ishii K."/>
            <person name="Yokoyama K."/>
            <person name="Han C.-G."/>
            <person name="Ohtsubo E."/>
            <person name="Nakayama K."/>
            <person name="Murata T."/>
            <person name="Tanaka M."/>
            <person name="Tobe T."/>
            <person name="Iida T."/>
            <person name="Takami H."/>
            <person name="Honda T."/>
            <person name="Sasakawa C."/>
            <person name="Ogasawara N."/>
            <person name="Yasunaga T."/>
            <person name="Kuhara S."/>
            <person name="Shiba T."/>
            <person name="Hattori M."/>
            <person name="Shinagawa H."/>
        </authorList>
    </citation>
    <scope>NUCLEOTIDE SEQUENCE [LARGE SCALE GENOMIC DNA]</scope>
    <source>
        <strain>O157:H7 / Sakai / RIMD 0509952 / EHEC</strain>
    </source>
</reference>
<reference key="3">
    <citation type="journal article" date="2014" name="Mol. Microbiol.">
        <title>The metabolic enzyme AdhE controls the virulence of Escherichia coli O157:H7.</title>
        <authorList>
            <person name="Beckham K.S."/>
            <person name="Connolly J.P."/>
            <person name="Ritchie J.M."/>
            <person name="Wang D."/>
            <person name="Gawthorne J.A."/>
            <person name="Tahoun A."/>
            <person name="Gally D.L."/>
            <person name="Burgess K."/>
            <person name="Burchmore R.J."/>
            <person name="Smith B.O."/>
            <person name="Beatson S.A."/>
            <person name="Byron O."/>
            <person name="Wolfe A.J."/>
            <person name="Douce G.R."/>
            <person name="Roe A.J."/>
        </authorList>
    </citation>
    <scope>FUNCTION IN VIRULENCE</scope>
    <scope>DISRUPTION PHENOTYPE</scope>
    <source>
        <strain>O157:H7 / EHEC</strain>
    </source>
</reference>
<reference evidence="7 8" key="4">
    <citation type="journal article" date="2020" name="Acta Crystallogr. F Struct. Biol. Commun.">
        <title>High-resolution structure of the alcohol dehydrogenase domain of the bifunctional bacterial enzyme AdhE.</title>
        <authorList>
            <person name="Azmi L."/>
            <person name="Bragginton E.C."/>
            <person name="Cadby I.T."/>
            <person name="Byron O."/>
            <person name="Roe A.J."/>
            <person name="Lovering A.L."/>
            <person name="Gabrielsen M."/>
        </authorList>
    </citation>
    <scope>X-RAY CRYSTALLOGRAPHY (1.65 ANGSTROMS) OF 451-891 IN COMPLEXES WITH NAD AND IRON</scope>
    <scope>COFACTOR</scope>
    <source>
        <strain>O157:H7 / EHEC</strain>
    </source>
</reference>
<keyword id="KW-0002">3D-structure</keyword>
<keyword id="KW-0408">Iron</keyword>
<keyword id="KW-0479">Metal-binding</keyword>
<keyword id="KW-0511">Multifunctional enzyme</keyword>
<keyword id="KW-0520">NAD</keyword>
<keyword id="KW-0560">Oxidoreductase</keyword>
<keyword id="KW-1185">Reference proteome</keyword>